<accession>B8D0C9</accession>
<sequence>MEARAVAKYVRVSPRKARQVIDLIRGKEIGEALGILKHTPKKASSIIEKVLNSAIANAENNHDMMVEDLYVSKAYVDEGPTMKRYRARAMGQAGLIRKRTSHITIVVSEKKEG</sequence>
<organism>
    <name type="scientific">Halothermothrix orenii (strain H 168 / OCM 544 / DSM 9562)</name>
    <dbReference type="NCBI Taxonomy" id="373903"/>
    <lineage>
        <taxon>Bacteria</taxon>
        <taxon>Bacillati</taxon>
        <taxon>Bacillota</taxon>
        <taxon>Clostridia</taxon>
        <taxon>Halanaerobiales</taxon>
        <taxon>Halothermotrichaceae</taxon>
        <taxon>Halothermothrix</taxon>
    </lineage>
</organism>
<keyword id="KW-1185">Reference proteome</keyword>
<keyword id="KW-0687">Ribonucleoprotein</keyword>
<keyword id="KW-0689">Ribosomal protein</keyword>
<keyword id="KW-0694">RNA-binding</keyword>
<keyword id="KW-0699">rRNA-binding</keyword>
<name>RL22_HALOH</name>
<comment type="function">
    <text evidence="1">This protein binds specifically to 23S rRNA; its binding is stimulated by other ribosomal proteins, e.g. L4, L17, and L20. It is important during the early stages of 50S assembly. It makes multiple contacts with different domains of the 23S rRNA in the assembled 50S subunit and ribosome (By similarity).</text>
</comment>
<comment type="function">
    <text evidence="1">The globular domain of the protein is located near the polypeptide exit tunnel on the outside of the subunit, while an extended beta-hairpin is found that lines the wall of the exit tunnel in the center of the 70S ribosome.</text>
</comment>
<comment type="subunit">
    <text evidence="1">Part of the 50S ribosomal subunit.</text>
</comment>
<comment type="similarity">
    <text evidence="1">Belongs to the universal ribosomal protein uL22 family.</text>
</comment>
<protein>
    <recommendedName>
        <fullName evidence="1">Large ribosomal subunit protein uL22</fullName>
    </recommendedName>
    <alternativeName>
        <fullName evidence="2">50S ribosomal protein L22</fullName>
    </alternativeName>
</protein>
<reference key="1">
    <citation type="journal article" date="2009" name="PLoS ONE">
        <title>Genome analysis of the anaerobic thermohalophilic bacterium Halothermothrix orenii.</title>
        <authorList>
            <person name="Mavromatis K."/>
            <person name="Ivanova N."/>
            <person name="Anderson I."/>
            <person name="Lykidis A."/>
            <person name="Hooper S.D."/>
            <person name="Sun H."/>
            <person name="Kunin V."/>
            <person name="Lapidus A."/>
            <person name="Hugenholtz P."/>
            <person name="Patel B."/>
            <person name="Kyrpides N.C."/>
        </authorList>
    </citation>
    <scope>NUCLEOTIDE SEQUENCE [LARGE SCALE GENOMIC DNA]</scope>
    <source>
        <strain>H 168 / OCM 544 / DSM 9562</strain>
    </source>
</reference>
<gene>
    <name evidence="1" type="primary">rplV</name>
    <name type="ordered locus">Hore_01220</name>
</gene>
<proteinExistence type="inferred from homology"/>
<feature type="chain" id="PRO_1000166065" description="Large ribosomal subunit protein uL22">
    <location>
        <begin position="1"/>
        <end position="113"/>
    </location>
</feature>
<dbReference type="EMBL" id="CP001098">
    <property type="protein sequence ID" value="ACL68883.1"/>
    <property type="molecule type" value="Genomic_DNA"/>
</dbReference>
<dbReference type="RefSeq" id="WP_012635081.1">
    <property type="nucleotide sequence ID" value="NC_011899.1"/>
</dbReference>
<dbReference type="SMR" id="B8D0C9"/>
<dbReference type="STRING" id="373903.Hore_01220"/>
<dbReference type="KEGG" id="hor:Hore_01220"/>
<dbReference type="eggNOG" id="COG0091">
    <property type="taxonomic scope" value="Bacteria"/>
</dbReference>
<dbReference type="HOGENOM" id="CLU_083987_3_3_9"/>
<dbReference type="OrthoDB" id="9805969at2"/>
<dbReference type="Proteomes" id="UP000000719">
    <property type="component" value="Chromosome"/>
</dbReference>
<dbReference type="GO" id="GO:0022625">
    <property type="term" value="C:cytosolic large ribosomal subunit"/>
    <property type="evidence" value="ECO:0007669"/>
    <property type="project" value="TreeGrafter"/>
</dbReference>
<dbReference type="GO" id="GO:0019843">
    <property type="term" value="F:rRNA binding"/>
    <property type="evidence" value="ECO:0007669"/>
    <property type="project" value="UniProtKB-UniRule"/>
</dbReference>
<dbReference type="GO" id="GO:0003735">
    <property type="term" value="F:structural constituent of ribosome"/>
    <property type="evidence" value="ECO:0007669"/>
    <property type="project" value="InterPro"/>
</dbReference>
<dbReference type="GO" id="GO:0006412">
    <property type="term" value="P:translation"/>
    <property type="evidence" value="ECO:0007669"/>
    <property type="project" value="UniProtKB-UniRule"/>
</dbReference>
<dbReference type="CDD" id="cd00336">
    <property type="entry name" value="Ribosomal_L22"/>
    <property type="match status" value="1"/>
</dbReference>
<dbReference type="FunFam" id="3.90.470.10:FF:000011">
    <property type="entry name" value="50S ribosomal protein L22"/>
    <property type="match status" value="1"/>
</dbReference>
<dbReference type="Gene3D" id="3.90.470.10">
    <property type="entry name" value="Ribosomal protein L22/L17"/>
    <property type="match status" value="1"/>
</dbReference>
<dbReference type="HAMAP" id="MF_01331_B">
    <property type="entry name" value="Ribosomal_uL22_B"/>
    <property type="match status" value="1"/>
</dbReference>
<dbReference type="InterPro" id="IPR001063">
    <property type="entry name" value="Ribosomal_uL22"/>
</dbReference>
<dbReference type="InterPro" id="IPR005727">
    <property type="entry name" value="Ribosomal_uL22_bac/chlpt-type"/>
</dbReference>
<dbReference type="InterPro" id="IPR047867">
    <property type="entry name" value="Ribosomal_uL22_bac/org-type"/>
</dbReference>
<dbReference type="InterPro" id="IPR018260">
    <property type="entry name" value="Ribosomal_uL22_CS"/>
</dbReference>
<dbReference type="InterPro" id="IPR036394">
    <property type="entry name" value="Ribosomal_uL22_sf"/>
</dbReference>
<dbReference type="NCBIfam" id="TIGR01044">
    <property type="entry name" value="rplV_bact"/>
    <property type="match status" value="1"/>
</dbReference>
<dbReference type="PANTHER" id="PTHR13501">
    <property type="entry name" value="CHLOROPLAST 50S RIBOSOMAL PROTEIN L22-RELATED"/>
    <property type="match status" value="1"/>
</dbReference>
<dbReference type="PANTHER" id="PTHR13501:SF8">
    <property type="entry name" value="LARGE RIBOSOMAL SUBUNIT PROTEIN UL22M"/>
    <property type="match status" value="1"/>
</dbReference>
<dbReference type="Pfam" id="PF00237">
    <property type="entry name" value="Ribosomal_L22"/>
    <property type="match status" value="1"/>
</dbReference>
<dbReference type="SUPFAM" id="SSF54843">
    <property type="entry name" value="Ribosomal protein L22"/>
    <property type="match status" value="1"/>
</dbReference>
<dbReference type="PROSITE" id="PS00464">
    <property type="entry name" value="RIBOSOMAL_L22"/>
    <property type="match status" value="1"/>
</dbReference>
<evidence type="ECO:0000255" key="1">
    <source>
        <dbReference type="HAMAP-Rule" id="MF_01331"/>
    </source>
</evidence>
<evidence type="ECO:0000305" key="2"/>